<comment type="function">
    <text evidence="1">Component of the cap-binding complex (CBC), which binds co-transcriptionally to the 5' cap of pre-mRNAs and is involved in various processes such as pre-mRNA splicing and RNA-mediated gene silencing (RNAi). The CBC complex is involved in miRNA-mediated RNA interference via its interaction with Ars2 and is required for primary microRNAs (miRNAs) processing. Also involved in innate immunity via the short interfering RNAs (siRNAs) processing machinery by restricting the viral RNA production. In the CBC complex, Cbp20 recognizes and binds capped RNAs (m7GpppG-capped RNA) but requires Cbp80 to stabilize the movement of its N-terminal loop and lock the CBC into a high affinity cap-binding state with the cap structure (By similarity).</text>
</comment>
<comment type="subunit">
    <text evidence="1">Component of the nuclear cap-binding complex (CBC), a heterodimer composed of Cbp80 and Cbp20 that interacts with m7GpppG-capped RNA. Interacts with Ars2 (By similarity).</text>
</comment>
<comment type="subcellular location">
    <subcellularLocation>
        <location evidence="1">Nucleus</location>
    </subcellularLocation>
</comment>
<comment type="similarity">
    <text evidence="3">Belongs to the RRM NCBP2 family.</text>
</comment>
<accession>B4PL68</accession>
<proteinExistence type="inferred from homology"/>
<organism>
    <name type="scientific">Drosophila yakuba</name>
    <name type="common">Fruit fly</name>
    <dbReference type="NCBI Taxonomy" id="7245"/>
    <lineage>
        <taxon>Eukaryota</taxon>
        <taxon>Metazoa</taxon>
        <taxon>Ecdysozoa</taxon>
        <taxon>Arthropoda</taxon>
        <taxon>Hexapoda</taxon>
        <taxon>Insecta</taxon>
        <taxon>Pterygota</taxon>
        <taxon>Neoptera</taxon>
        <taxon>Endopterygota</taxon>
        <taxon>Diptera</taxon>
        <taxon>Brachycera</taxon>
        <taxon>Muscomorpha</taxon>
        <taxon>Ephydroidea</taxon>
        <taxon>Drosophilidae</taxon>
        <taxon>Drosophila</taxon>
        <taxon>Sophophora</taxon>
    </lineage>
</organism>
<sequence>MSASVELSSYRDQHFKGSRSEQERSLRDSCTLYVGNLSFYTTEEQIHELFSRCGDVRVIVMGLDKYKKTPCGFCFVEYYIRSEAEAAMRFVNGTRLDDRLIRVDWDAGFIEGRQYGRGKTGGQVRDEYRTDYDAGRGGYGKLLSQKIAPNTDNR</sequence>
<name>NCBP2_DROYA</name>
<dbReference type="EMBL" id="CM000160">
    <property type="protein sequence ID" value="EDW95850.1"/>
    <property type="molecule type" value="Genomic_DNA"/>
</dbReference>
<dbReference type="SMR" id="B4PL68"/>
<dbReference type="EnsemblMetazoa" id="FBtr0272032">
    <property type="protein sequence ID" value="FBpp0270524"/>
    <property type="gene ID" value="FBgn0242580"/>
</dbReference>
<dbReference type="EnsemblMetazoa" id="XM_002096102.3">
    <property type="protein sequence ID" value="XP_002096138.1"/>
    <property type="gene ID" value="LOC6535509"/>
</dbReference>
<dbReference type="GeneID" id="6535509"/>
<dbReference type="KEGG" id="dya:Dyak_GE25514"/>
<dbReference type="CTD" id="42166"/>
<dbReference type="eggNOG" id="KOG0121">
    <property type="taxonomic scope" value="Eukaryota"/>
</dbReference>
<dbReference type="HOGENOM" id="CLU_070952_2_0_1"/>
<dbReference type="OMA" id="DIRRIIM"/>
<dbReference type="OrthoDB" id="201398at2759"/>
<dbReference type="PhylomeDB" id="B4PL68"/>
<dbReference type="Proteomes" id="UP000002282">
    <property type="component" value="Chromosome 3R"/>
</dbReference>
<dbReference type="GO" id="GO:0005846">
    <property type="term" value="C:nuclear cap binding complex"/>
    <property type="evidence" value="ECO:0007669"/>
    <property type="project" value="InterPro"/>
</dbReference>
<dbReference type="GO" id="GO:0005634">
    <property type="term" value="C:nucleus"/>
    <property type="evidence" value="ECO:0007669"/>
    <property type="project" value="UniProtKB-SubCell"/>
</dbReference>
<dbReference type="GO" id="GO:0099523">
    <property type="term" value="C:presynaptic cytosol"/>
    <property type="evidence" value="ECO:0007669"/>
    <property type="project" value="EnsemblMetazoa"/>
</dbReference>
<dbReference type="GO" id="GO:0000339">
    <property type="term" value="F:RNA cap binding"/>
    <property type="evidence" value="ECO:0007669"/>
    <property type="project" value="InterPro"/>
</dbReference>
<dbReference type="GO" id="GO:0045292">
    <property type="term" value="P:mRNA cis splicing, via spliceosome"/>
    <property type="evidence" value="ECO:0007669"/>
    <property type="project" value="InterPro"/>
</dbReference>
<dbReference type="GO" id="GO:0045071">
    <property type="term" value="P:negative regulation of viral genome replication"/>
    <property type="evidence" value="ECO:0007669"/>
    <property type="project" value="EnsemblMetazoa"/>
</dbReference>
<dbReference type="GO" id="GO:0031053">
    <property type="term" value="P:primary miRNA processing"/>
    <property type="evidence" value="ECO:0007669"/>
    <property type="project" value="EnsemblMetazoa"/>
</dbReference>
<dbReference type="GO" id="GO:0035194">
    <property type="term" value="P:regulatory ncRNA-mediated post-transcriptional gene silencing"/>
    <property type="evidence" value="ECO:0007669"/>
    <property type="project" value="EnsemblMetazoa"/>
</dbReference>
<dbReference type="GO" id="GO:0030422">
    <property type="term" value="P:siRNA processing"/>
    <property type="evidence" value="ECO:0007669"/>
    <property type="project" value="EnsemblMetazoa"/>
</dbReference>
<dbReference type="CDD" id="cd12240">
    <property type="entry name" value="RRM_NCBP2"/>
    <property type="match status" value="1"/>
</dbReference>
<dbReference type="FunFam" id="3.30.70.330:FF:000128">
    <property type="entry name" value="Nuclear cap-binding protein subunit 2"/>
    <property type="match status" value="1"/>
</dbReference>
<dbReference type="Gene3D" id="3.30.70.330">
    <property type="match status" value="1"/>
</dbReference>
<dbReference type="InterPro" id="IPR027157">
    <property type="entry name" value="NCBP2"/>
</dbReference>
<dbReference type="InterPro" id="IPR034148">
    <property type="entry name" value="NCBP2_RRM"/>
</dbReference>
<dbReference type="InterPro" id="IPR012677">
    <property type="entry name" value="Nucleotide-bd_a/b_plait_sf"/>
</dbReference>
<dbReference type="InterPro" id="IPR035979">
    <property type="entry name" value="RBD_domain_sf"/>
</dbReference>
<dbReference type="InterPro" id="IPR000504">
    <property type="entry name" value="RRM_dom"/>
</dbReference>
<dbReference type="PANTHER" id="PTHR18847">
    <property type="entry name" value="20 KD NUCLEAR CAP BINDING PROTEIN"/>
    <property type="match status" value="1"/>
</dbReference>
<dbReference type="PANTHER" id="PTHR18847:SF0">
    <property type="entry name" value="NUCLEAR CAP-BINDING PROTEIN SUBUNIT 2"/>
    <property type="match status" value="1"/>
</dbReference>
<dbReference type="Pfam" id="PF00076">
    <property type="entry name" value="RRM_1"/>
    <property type="match status" value="1"/>
</dbReference>
<dbReference type="SMART" id="SM00360">
    <property type="entry name" value="RRM"/>
    <property type="match status" value="1"/>
</dbReference>
<dbReference type="SUPFAM" id="SSF54928">
    <property type="entry name" value="RNA-binding domain, RBD"/>
    <property type="match status" value="1"/>
</dbReference>
<dbReference type="PROSITE" id="PS50102">
    <property type="entry name" value="RRM"/>
    <property type="match status" value="1"/>
</dbReference>
<reference key="1">
    <citation type="journal article" date="2007" name="Nature">
        <title>Evolution of genes and genomes on the Drosophila phylogeny.</title>
        <authorList>
            <consortium name="Drosophila 12 genomes consortium"/>
        </authorList>
    </citation>
    <scope>NUCLEOTIDE SEQUENCE [LARGE SCALE GENOMIC DNA]</scope>
    <source>
        <strain>Tai18E2 / Tucson 14021-0261.01</strain>
    </source>
</reference>
<protein>
    <recommendedName>
        <fullName>Nuclear cap-binding protein subunit 2</fullName>
    </recommendedName>
    <alternativeName>
        <fullName>20 kDa nuclear cap-binding protein</fullName>
    </alternativeName>
    <alternativeName>
        <fullName>NCBP 20 kDa subunit</fullName>
        <shortName>CBP20</shortName>
    </alternativeName>
</protein>
<gene>
    <name type="primary">Cbp20</name>
    <name type="ORF">GE25514</name>
</gene>
<evidence type="ECO:0000250" key="1"/>
<evidence type="ECO:0000255" key="2">
    <source>
        <dbReference type="PROSITE-ProRule" id="PRU00176"/>
    </source>
</evidence>
<evidence type="ECO:0000305" key="3"/>
<keyword id="KW-0507">mRNA processing</keyword>
<keyword id="KW-0508">mRNA splicing</keyword>
<keyword id="KW-0539">Nucleus</keyword>
<keyword id="KW-0694">RNA-binding</keyword>
<keyword id="KW-0943">RNA-mediated gene silencing</keyword>
<feature type="chain" id="PRO_0000385275" description="Nuclear cap-binding protein subunit 2">
    <location>
        <begin position="1"/>
        <end position="154"/>
    </location>
</feature>
<feature type="domain" description="RRM" evidence="2">
    <location>
        <begin position="30"/>
        <end position="108"/>
    </location>
</feature>
<feature type="binding site" evidence="1">
    <location>
        <position position="10"/>
    </location>
    <ligand>
        <name>mRNA</name>
        <dbReference type="ChEBI" id="CHEBI:33699"/>
    </ligand>
    <ligandPart>
        <name>mRNA cap</name>
    </ligandPart>
</feature>
<feature type="binding site" evidence="1">
    <location>
        <position position="33"/>
    </location>
    <ligand>
        <name>mRNA</name>
        <dbReference type="ChEBI" id="CHEBI:33699"/>
    </ligand>
    <ligandPart>
        <name>mRNA cap</name>
    </ligandPart>
</feature>
<feature type="binding site" evidence="1">
    <location>
        <begin position="102"/>
        <end position="106"/>
    </location>
    <ligand>
        <name>mRNA</name>
        <dbReference type="ChEBI" id="CHEBI:33699"/>
    </ligand>
    <ligandPart>
        <name>mRNA cap</name>
    </ligandPart>
</feature>
<feature type="binding site" evidence="1">
    <location>
        <begin position="113"/>
        <end position="117"/>
    </location>
    <ligand>
        <name>mRNA</name>
        <dbReference type="ChEBI" id="CHEBI:33699"/>
    </ligand>
    <ligandPart>
        <name>mRNA cap</name>
    </ligandPart>
</feature>
<feature type="binding site" evidence="1">
    <location>
        <begin position="123"/>
        <end position="124"/>
    </location>
    <ligand>
        <name>mRNA</name>
        <dbReference type="ChEBI" id="CHEBI:33699"/>
    </ligand>
    <ligandPart>
        <name>mRNA cap</name>
    </ligandPart>
</feature>